<accession>A3QVN6</accession>
<name>HYAL_ECHPL</name>
<evidence type="ECO:0000250" key="1"/>
<evidence type="ECO:0000255" key="2"/>
<evidence type="ECO:0000305" key="3"/>
<keyword id="KW-1015">Disulfide bond</keyword>
<keyword id="KW-0245">EGF-like domain</keyword>
<keyword id="KW-0325">Glycoprotein</keyword>
<keyword id="KW-0326">Glycosidase</keyword>
<keyword id="KW-0378">Hydrolase</keyword>
<keyword id="KW-0964">Secreted</keyword>
<keyword id="KW-0732">Signal</keyword>
<sequence>MYHIWIKFLAAWIFLKRFNGVHVMQAKAPMYRNEPFLVFWNAPTTQCRLRYKVDLDLKTFHIVSNANDSLSGSAVTIFYPNHLGVYPHIDDRGHFFHGIIPQNESLTKHLNKSKSDINRIIPLKAFHGLGVIDWENWRPQWDRNWGSKNVYRNRSIQFARDLHPELSEDKIRRLAKKEYEKAAKSFMRDTLLLAEEMRPDGYWGYYLYPDCQNYDYKTKGDQYTGKCPEIEMSRNDQLLWLWRDSTALFPNVYLEIILRSSDNALKFVHHRLKEAMRIASMAREDYALPVFAYARPFYAYTFEPLTQEDLVTTVGETAAMGAAGIVFWGSMQYASTVDSCQKVKKYMNGPLGRYIVNVTTAAKICSRVFCRKNGRCVRKHSDSNAFLHLFPESFRIMVYANATEKKVIVKGKLELENLIYLRENFMCQCYQGWKGLYCEEYSIKDIRKI</sequence>
<organism>
    <name type="scientific">Echis pyramidum leakeyi</name>
    <name type="common">Leakey's carpet viper</name>
    <name type="synonym">Echis carinatus leakeyi</name>
    <dbReference type="NCBI Taxonomy" id="38415"/>
    <lineage>
        <taxon>Eukaryota</taxon>
        <taxon>Metazoa</taxon>
        <taxon>Chordata</taxon>
        <taxon>Craniata</taxon>
        <taxon>Vertebrata</taxon>
        <taxon>Euteleostomi</taxon>
        <taxon>Lepidosauria</taxon>
        <taxon>Squamata</taxon>
        <taxon>Bifurcata</taxon>
        <taxon>Unidentata</taxon>
        <taxon>Episquamata</taxon>
        <taxon>Toxicofera</taxon>
        <taxon>Serpentes</taxon>
        <taxon>Colubroidea</taxon>
        <taxon>Viperidae</taxon>
        <taxon>Viperinae</taxon>
        <taxon>Echis</taxon>
    </lineage>
</organism>
<comment type="function">
    <text evidence="1">Snake venom endo-hyaluronidase that degrades hyaluronan to smaller oligosaccharide fragments. In venom, it is not toxic by itself, but increases the diffusion of other venom proteins by degrading the extracellular matrix. In addition, it displays antiedematogenic activity (By similarity).</text>
</comment>
<comment type="catalytic activity">
    <reaction>
        <text>Random hydrolysis of (1-&gt;4)-linkages between N-acetyl-beta-D-glucosamine and D-glucuronate residues in hyaluronate.</text>
        <dbReference type="EC" id="3.2.1.35"/>
    </reaction>
</comment>
<comment type="subunit">
    <text evidence="1">Monomer.</text>
</comment>
<comment type="subcellular location">
    <subcellularLocation>
        <location evidence="1">Secreted</location>
    </subcellularLocation>
</comment>
<comment type="tissue specificity">
    <text>Expressed by the venom gland.</text>
</comment>
<comment type="similarity">
    <text evidence="3">Belongs to the glycosyl hydrolase 56 family.</text>
</comment>
<proteinExistence type="evidence at transcript level"/>
<reference key="1">
    <citation type="journal article" date="2007" name="Gene">
        <title>Identification of cDNAs encoding viper venom hyaluronidases: cross-generic sequence conservation of full-length and unusually short variant transcripts.</title>
        <authorList>
            <person name="Harrison R.A."/>
            <person name="Ibison F."/>
            <person name="Wilbraham D."/>
            <person name="Wagstaff S.C."/>
        </authorList>
    </citation>
    <scope>NUCLEOTIDE SEQUENCE [MRNA]</scope>
    <source>
        <tissue>Venom gland</tissue>
    </source>
</reference>
<protein>
    <recommendedName>
        <fullName>Hyaluronidase</fullName>
        <shortName>Hy</shortName>
        <ecNumber>3.2.1.35</ecNumber>
    </recommendedName>
    <alternativeName>
        <fullName>Hyaluronoglucosaminidase</fullName>
    </alternativeName>
    <alternativeName>
        <fullName>Venom spreading factor</fullName>
    </alternativeName>
</protein>
<dbReference type="EC" id="3.2.1.35"/>
<dbReference type="EMBL" id="DQ840253">
    <property type="protein sequence ID" value="ABI33941.1"/>
    <property type="molecule type" value="mRNA"/>
</dbReference>
<dbReference type="SMR" id="A3QVN6"/>
<dbReference type="CAZy" id="GH56">
    <property type="family name" value="Glycoside Hydrolase Family 56"/>
</dbReference>
<dbReference type="GO" id="GO:0031410">
    <property type="term" value="C:cytoplasmic vesicle"/>
    <property type="evidence" value="ECO:0007669"/>
    <property type="project" value="TreeGrafter"/>
</dbReference>
<dbReference type="GO" id="GO:0005576">
    <property type="term" value="C:extracellular region"/>
    <property type="evidence" value="ECO:0007669"/>
    <property type="project" value="UniProtKB-SubCell"/>
</dbReference>
<dbReference type="GO" id="GO:0004415">
    <property type="term" value="F:hyalurononglucosaminidase activity"/>
    <property type="evidence" value="ECO:0007669"/>
    <property type="project" value="UniProtKB-EC"/>
</dbReference>
<dbReference type="GO" id="GO:0005975">
    <property type="term" value="P:carbohydrate metabolic process"/>
    <property type="evidence" value="ECO:0007669"/>
    <property type="project" value="InterPro"/>
</dbReference>
<dbReference type="GO" id="GO:0030214">
    <property type="term" value="P:hyaluronan catabolic process"/>
    <property type="evidence" value="ECO:0007669"/>
    <property type="project" value="TreeGrafter"/>
</dbReference>
<dbReference type="FunFam" id="3.20.20.70:FF:000065">
    <property type="entry name" value="Hyaluronidase"/>
    <property type="match status" value="1"/>
</dbReference>
<dbReference type="Gene3D" id="3.20.20.70">
    <property type="entry name" value="Aldolase class I"/>
    <property type="match status" value="1"/>
</dbReference>
<dbReference type="InterPro" id="IPR013785">
    <property type="entry name" value="Aldolase_TIM"/>
</dbReference>
<dbReference type="InterPro" id="IPR017853">
    <property type="entry name" value="Glycoside_hydrolase_SF"/>
</dbReference>
<dbReference type="InterPro" id="IPR018155">
    <property type="entry name" value="Hyaluronidase"/>
</dbReference>
<dbReference type="PANTHER" id="PTHR11769">
    <property type="entry name" value="HYALURONIDASE"/>
    <property type="match status" value="1"/>
</dbReference>
<dbReference type="PANTHER" id="PTHR11769:SF9">
    <property type="entry name" value="HYALURONIDASE"/>
    <property type="match status" value="1"/>
</dbReference>
<dbReference type="Pfam" id="PF01630">
    <property type="entry name" value="Glyco_hydro_56"/>
    <property type="match status" value="1"/>
</dbReference>
<dbReference type="PIRSF" id="PIRSF038193">
    <property type="entry name" value="Hyaluronidase"/>
    <property type="match status" value="1"/>
</dbReference>
<dbReference type="PRINTS" id="PR00846">
    <property type="entry name" value="GLHYDRLASE56"/>
</dbReference>
<dbReference type="SUPFAM" id="SSF51445">
    <property type="entry name" value="(Trans)glycosidases"/>
    <property type="match status" value="1"/>
</dbReference>
<dbReference type="PROSITE" id="PS00022">
    <property type="entry name" value="EGF_1"/>
    <property type="match status" value="1"/>
</dbReference>
<dbReference type="PROSITE" id="PS01186">
    <property type="entry name" value="EGF_2"/>
    <property type="match status" value="1"/>
</dbReference>
<feature type="signal peptide" evidence="1">
    <location>
        <begin position="1"/>
        <end position="23"/>
    </location>
</feature>
<feature type="chain" id="PRO_0000420457" description="Hyaluronidase">
    <location>
        <begin position="24"/>
        <end position="449"/>
    </location>
</feature>
<feature type="domain" description="EGF-like">
    <location>
        <begin position="427"/>
        <end position="438"/>
    </location>
</feature>
<feature type="active site" description="Proton donor" evidence="1">
    <location>
        <position position="135"/>
    </location>
</feature>
<feature type="glycosylation site" description="N-linked (GlcNAc...) asparagine" evidence="2">
    <location>
        <position position="67"/>
    </location>
</feature>
<feature type="glycosylation site" description="N-linked (GlcNAc...) asparagine" evidence="2">
    <location>
        <position position="103"/>
    </location>
</feature>
<feature type="glycosylation site" description="N-linked (GlcNAc...) asparagine" evidence="2">
    <location>
        <position position="111"/>
    </location>
</feature>
<feature type="glycosylation site" description="N-linked (GlcNAc...) asparagine" evidence="2">
    <location>
        <position position="153"/>
    </location>
</feature>
<feature type="glycosylation site" description="N-linked (GlcNAc...) asparagine" evidence="2">
    <location>
        <position position="357"/>
    </location>
</feature>
<feature type="glycosylation site" description="N-linked (GlcNAc...) asparagine" evidence="2">
    <location>
        <position position="401"/>
    </location>
</feature>
<feature type="disulfide bond" evidence="1">
    <location>
        <begin position="47"/>
        <end position="340"/>
    </location>
</feature>
<feature type="disulfide bond" evidence="1">
    <location>
        <begin position="211"/>
        <end position="227"/>
    </location>
</feature>
<feature type="disulfide bond" evidence="1">
    <location>
        <begin position="365"/>
        <end position="376"/>
    </location>
</feature>
<feature type="disulfide bond" evidence="1">
    <location>
        <begin position="370"/>
        <end position="427"/>
    </location>
</feature>
<feature type="disulfide bond" evidence="1">
    <location>
        <begin position="429"/>
        <end position="438"/>
    </location>
</feature>